<comment type="function">
    <text evidence="1">DNA-dependent RNA polymerase catalyzes the transcription of DNA into RNA using the four ribonucleoside triphosphates as substrates.</text>
</comment>
<comment type="catalytic activity">
    <reaction evidence="1">
        <text>RNA(n) + a ribonucleoside 5'-triphosphate = RNA(n+1) + diphosphate</text>
        <dbReference type="Rhea" id="RHEA:21248"/>
        <dbReference type="Rhea" id="RHEA-COMP:14527"/>
        <dbReference type="Rhea" id="RHEA-COMP:17342"/>
        <dbReference type="ChEBI" id="CHEBI:33019"/>
        <dbReference type="ChEBI" id="CHEBI:61557"/>
        <dbReference type="ChEBI" id="CHEBI:140395"/>
        <dbReference type="EC" id="2.7.7.6"/>
    </reaction>
</comment>
<comment type="subunit">
    <text evidence="1">Homodimer. The RNAP catalytic core consists of 2 alpha, 1 beta, 1 beta' and 1 omega subunit. When a sigma factor is associated with the core the holoenzyme is formed, which can initiate transcription.</text>
</comment>
<comment type="domain">
    <text evidence="1">The N-terminal domain is essential for RNAP assembly and basal transcription, whereas the C-terminal domain is involved in interaction with transcriptional regulators and with upstream promoter elements.</text>
</comment>
<comment type="similarity">
    <text evidence="1">Belongs to the RNA polymerase alpha chain family.</text>
</comment>
<organism>
    <name type="scientific">Neorickettsia sennetsu (strain ATCC VR-367 / Miyayama)</name>
    <name type="common">Ehrlichia sennetsu</name>
    <dbReference type="NCBI Taxonomy" id="222891"/>
    <lineage>
        <taxon>Bacteria</taxon>
        <taxon>Pseudomonadati</taxon>
        <taxon>Pseudomonadota</taxon>
        <taxon>Alphaproteobacteria</taxon>
        <taxon>Rickettsiales</taxon>
        <taxon>Anaplasmataceae</taxon>
        <taxon>Neorickettsia</taxon>
    </lineage>
</organism>
<proteinExistence type="inferred from homology"/>
<sequence>MSAVLDKGSLVDVFSSPSVVFNQIREGYCAEFIVEPLRVGFGLTIGNAMRRVLLSSLSGFAISAVGIKGLTHEFSCIPGVREDFADLALNLKKVVLKSISGATCGNLHLSVTDGGAVFSNMISPSHDFEVVNGDLLICNVAEGVSLEMEMKVSSGFGYVSSVSVRKDEYDLEGAVPIDAIYNPVRAVNFTVKPTSAGSFAGHDKLILYVETNGAMDPKTAVLEASKILSTQARCFLNIADPEHRVHGVPCGVSTSDRNDASDLLSARIDRLYLSARARKCLNGENIVYIRDLVSRTEADLLKAPNFGRRSLEEVKKELFSKGLSLGMNLDSHG</sequence>
<protein>
    <recommendedName>
        <fullName evidence="1">DNA-directed RNA polymerase subunit alpha</fullName>
        <shortName evidence="1">RNAP subunit alpha</shortName>
        <ecNumber evidence="1">2.7.7.6</ecNumber>
    </recommendedName>
    <alternativeName>
        <fullName evidence="1">RNA polymerase subunit alpha</fullName>
    </alternativeName>
    <alternativeName>
        <fullName evidence="1">Transcriptase subunit alpha</fullName>
    </alternativeName>
</protein>
<evidence type="ECO:0000255" key="1">
    <source>
        <dbReference type="HAMAP-Rule" id="MF_00059"/>
    </source>
</evidence>
<keyword id="KW-0240">DNA-directed RNA polymerase</keyword>
<keyword id="KW-0548">Nucleotidyltransferase</keyword>
<keyword id="KW-0804">Transcription</keyword>
<keyword id="KW-0808">Transferase</keyword>
<reference key="1">
    <citation type="journal article" date="2006" name="PLoS Genet.">
        <title>Comparative genomics of emerging human ehrlichiosis agents.</title>
        <authorList>
            <person name="Dunning Hotopp J.C."/>
            <person name="Lin M."/>
            <person name="Madupu R."/>
            <person name="Crabtree J."/>
            <person name="Angiuoli S.V."/>
            <person name="Eisen J.A."/>
            <person name="Seshadri R."/>
            <person name="Ren Q."/>
            <person name="Wu M."/>
            <person name="Utterback T.R."/>
            <person name="Smith S."/>
            <person name="Lewis M."/>
            <person name="Khouri H."/>
            <person name="Zhang C."/>
            <person name="Niu H."/>
            <person name="Lin Q."/>
            <person name="Ohashi N."/>
            <person name="Zhi N."/>
            <person name="Nelson W.C."/>
            <person name="Brinkac L.M."/>
            <person name="Dodson R.J."/>
            <person name="Rosovitz M.J."/>
            <person name="Sundaram J.P."/>
            <person name="Daugherty S.C."/>
            <person name="Davidsen T."/>
            <person name="Durkin A.S."/>
            <person name="Gwinn M.L."/>
            <person name="Haft D.H."/>
            <person name="Selengut J.D."/>
            <person name="Sullivan S.A."/>
            <person name="Zafar N."/>
            <person name="Zhou L."/>
            <person name="Benahmed F."/>
            <person name="Forberger H."/>
            <person name="Halpin R."/>
            <person name="Mulligan S."/>
            <person name="Robinson J."/>
            <person name="White O."/>
            <person name="Rikihisa Y."/>
            <person name="Tettelin H."/>
        </authorList>
    </citation>
    <scope>NUCLEOTIDE SEQUENCE [LARGE SCALE GENOMIC DNA]</scope>
    <source>
        <strain>ATCC VR-367 / Miyayama</strain>
    </source>
</reference>
<accession>Q2GEB6</accession>
<feature type="chain" id="PRO_0000264520" description="DNA-directed RNA polymerase subunit alpha">
    <location>
        <begin position="1"/>
        <end position="333"/>
    </location>
</feature>
<feature type="region of interest" description="Alpha N-terminal domain (alpha-NTD)" evidence="1">
    <location>
        <begin position="1"/>
        <end position="239"/>
    </location>
</feature>
<feature type="region of interest" description="Alpha C-terminal domain (alpha-CTD)" evidence="1">
    <location>
        <begin position="259"/>
        <end position="333"/>
    </location>
</feature>
<name>RPOA_NEOSM</name>
<gene>
    <name evidence="1" type="primary">rpoA</name>
    <name type="ordered locus">NSE_0289</name>
</gene>
<dbReference type="EC" id="2.7.7.6" evidence="1"/>
<dbReference type="EMBL" id="CP000237">
    <property type="protein sequence ID" value="ABD46412.1"/>
    <property type="molecule type" value="Genomic_DNA"/>
</dbReference>
<dbReference type="RefSeq" id="WP_011451686.1">
    <property type="nucleotide sequence ID" value="NC_007798.1"/>
</dbReference>
<dbReference type="SMR" id="Q2GEB6"/>
<dbReference type="STRING" id="222891.NSE_0289"/>
<dbReference type="KEGG" id="nse:NSE_0289"/>
<dbReference type="eggNOG" id="COG0202">
    <property type="taxonomic scope" value="Bacteria"/>
</dbReference>
<dbReference type="HOGENOM" id="CLU_053084_0_0_5"/>
<dbReference type="OrthoDB" id="9805706at2"/>
<dbReference type="Proteomes" id="UP000001942">
    <property type="component" value="Chromosome"/>
</dbReference>
<dbReference type="GO" id="GO:0005737">
    <property type="term" value="C:cytoplasm"/>
    <property type="evidence" value="ECO:0007669"/>
    <property type="project" value="UniProtKB-ARBA"/>
</dbReference>
<dbReference type="GO" id="GO:0000428">
    <property type="term" value="C:DNA-directed RNA polymerase complex"/>
    <property type="evidence" value="ECO:0007669"/>
    <property type="project" value="UniProtKB-KW"/>
</dbReference>
<dbReference type="GO" id="GO:0003677">
    <property type="term" value="F:DNA binding"/>
    <property type="evidence" value="ECO:0007669"/>
    <property type="project" value="UniProtKB-UniRule"/>
</dbReference>
<dbReference type="GO" id="GO:0003899">
    <property type="term" value="F:DNA-directed RNA polymerase activity"/>
    <property type="evidence" value="ECO:0007669"/>
    <property type="project" value="UniProtKB-UniRule"/>
</dbReference>
<dbReference type="GO" id="GO:0046983">
    <property type="term" value="F:protein dimerization activity"/>
    <property type="evidence" value="ECO:0007669"/>
    <property type="project" value="InterPro"/>
</dbReference>
<dbReference type="GO" id="GO:0006351">
    <property type="term" value="P:DNA-templated transcription"/>
    <property type="evidence" value="ECO:0007669"/>
    <property type="project" value="UniProtKB-UniRule"/>
</dbReference>
<dbReference type="CDD" id="cd06928">
    <property type="entry name" value="RNAP_alpha_NTD"/>
    <property type="match status" value="1"/>
</dbReference>
<dbReference type="FunFam" id="2.170.120.12:FF:000001">
    <property type="entry name" value="DNA-directed RNA polymerase subunit alpha"/>
    <property type="match status" value="1"/>
</dbReference>
<dbReference type="Gene3D" id="1.10.150.20">
    <property type="entry name" value="5' to 3' exonuclease, C-terminal subdomain"/>
    <property type="match status" value="1"/>
</dbReference>
<dbReference type="Gene3D" id="2.170.120.12">
    <property type="entry name" value="DNA-directed RNA polymerase, insert domain"/>
    <property type="match status" value="1"/>
</dbReference>
<dbReference type="Gene3D" id="3.30.1360.10">
    <property type="entry name" value="RNA polymerase, RBP11-like subunit"/>
    <property type="match status" value="1"/>
</dbReference>
<dbReference type="HAMAP" id="MF_00059">
    <property type="entry name" value="RNApol_bact_RpoA"/>
    <property type="match status" value="1"/>
</dbReference>
<dbReference type="InterPro" id="IPR011262">
    <property type="entry name" value="DNA-dir_RNA_pol_insert"/>
</dbReference>
<dbReference type="InterPro" id="IPR011263">
    <property type="entry name" value="DNA-dir_RNA_pol_RpoA/D/Rpb3"/>
</dbReference>
<dbReference type="InterPro" id="IPR011773">
    <property type="entry name" value="DNA-dir_RpoA"/>
</dbReference>
<dbReference type="InterPro" id="IPR036603">
    <property type="entry name" value="RBP11-like"/>
</dbReference>
<dbReference type="InterPro" id="IPR011260">
    <property type="entry name" value="RNAP_asu_C"/>
</dbReference>
<dbReference type="InterPro" id="IPR036643">
    <property type="entry name" value="RNApol_insert_sf"/>
</dbReference>
<dbReference type="NCBIfam" id="NF003513">
    <property type="entry name" value="PRK05182.1-2"/>
    <property type="match status" value="1"/>
</dbReference>
<dbReference type="NCBIfam" id="NF003519">
    <property type="entry name" value="PRK05182.2-5"/>
    <property type="match status" value="1"/>
</dbReference>
<dbReference type="NCBIfam" id="TIGR02027">
    <property type="entry name" value="rpoA"/>
    <property type="match status" value="1"/>
</dbReference>
<dbReference type="Pfam" id="PF01000">
    <property type="entry name" value="RNA_pol_A_bac"/>
    <property type="match status" value="1"/>
</dbReference>
<dbReference type="Pfam" id="PF03118">
    <property type="entry name" value="RNA_pol_A_CTD"/>
    <property type="match status" value="1"/>
</dbReference>
<dbReference type="Pfam" id="PF01193">
    <property type="entry name" value="RNA_pol_L"/>
    <property type="match status" value="1"/>
</dbReference>
<dbReference type="SMART" id="SM00662">
    <property type="entry name" value="RPOLD"/>
    <property type="match status" value="1"/>
</dbReference>
<dbReference type="SUPFAM" id="SSF47789">
    <property type="entry name" value="C-terminal domain of RNA polymerase alpha subunit"/>
    <property type="match status" value="1"/>
</dbReference>
<dbReference type="SUPFAM" id="SSF56553">
    <property type="entry name" value="Insert subdomain of RNA polymerase alpha subunit"/>
    <property type="match status" value="1"/>
</dbReference>
<dbReference type="SUPFAM" id="SSF55257">
    <property type="entry name" value="RBP11-like subunits of RNA polymerase"/>
    <property type="match status" value="1"/>
</dbReference>